<comment type="function">
    <text evidence="1">Thiol-specific peroxidase that catalyzes the reduction of hydrogen peroxide and organic hydroperoxides to water and alcohols, respectively. Plays a role in cell protection against oxidative stress by detoxifying peroxides and as sensor of hydrogen peroxide-mediated signaling events.</text>
</comment>
<comment type="catalytic activity">
    <reaction evidence="1">
        <text>a hydroperoxide + [thioredoxin]-dithiol = an alcohol + [thioredoxin]-disulfide + H2O</text>
        <dbReference type="Rhea" id="RHEA:62620"/>
        <dbReference type="Rhea" id="RHEA-COMP:10698"/>
        <dbReference type="Rhea" id="RHEA-COMP:10700"/>
        <dbReference type="ChEBI" id="CHEBI:15377"/>
        <dbReference type="ChEBI" id="CHEBI:29950"/>
        <dbReference type="ChEBI" id="CHEBI:30879"/>
        <dbReference type="ChEBI" id="CHEBI:35924"/>
        <dbReference type="ChEBI" id="CHEBI:50058"/>
        <dbReference type="EC" id="1.11.1.24"/>
    </reaction>
</comment>
<comment type="subcellular location">
    <subcellularLocation>
        <location>Peroxisome membrane</location>
        <topology evidence="3">Peripheral membrane protein</topology>
    </subcellularLocation>
</comment>
<comment type="induction">
    <text evidence="3">By methanol.</text>
</comment>
<comment type="allergen">
    <text evidence="3">Causes an allergic reaction in human. Shares common IgE-binding epitopes with allergen Asp f 3 of Aspergillus fumigatus.</text>
</comment>
<comment type="miscellaneous">
    <text evidence="4">The active site is a conserved redox-active cysteine residue, the peroxidatic cysteine (C(P)), which makes the nucleophilic attack on the peroxide substrate. The peroxide oxidizes the C(P)-SH to cysteine sulfenic acid (C(P)-SOH), which then reacts with another cysteine residue, the resolving cysteine (C(R)), to form a disulfide bridge. The disulfide is subsequently reduced by an appropriate electron donor to complete the catalytic cycle. In this 1-Cys peroxiredoxin, no C(R) is present and C(P) instead forms a disulfide with a cysteine from another protein or with a small thiol molecule.</text>
</comment>
<comment type="similarity">
    <text evidence="4">Belongs to the peroxiredoxin family. Prx5 subfamily.</text>
</comment>
<reference key="1">
    <citation type="journal article" date="1989" name="J. Biol. Chem.">
        <title>Two genes encode the major membrane-associated protein of methanol-induced peroxisomes from Candida boidinii.</title>
        <authorList>
            <person name="Garrard L.J."/>
            <person name="Goodman J.M."/>
        </authorList>
    </citation>
    <scope>NUCLEOTIDE SEQUENCE [GENOMIC DNA]</scope>
    <scope>PROTEIN SEQUENCE OF 2-26</scope>
    <scope>SUBCELLULAR LOCATION</scope>
    <scope>INDUCTION</scope>
    <source>
        <strain>ATCC 32195</strain>
    </source>
</reference>
<reference key="2">
    <citation type="journal article" date="1997" name="Am. J. Respir. Crit. Care Med.">
        <title>Allergens of Aspergillus fumigatus and Candida boidinii share IgE-binding epitopes.</title>
        <authorList>
            <person name="Hemmann S."/>
            <person name="Blaser K."/>
            <person name="Crameri R."/>
        </authorList>
    </citation>
    <scope>CROSS-REACTIVITY WITH ASP F 3</scope>
</reference>
<feature type="initiator methionine" description="Removed" evidence="3">
    <location>
        <position position="1"/>
    </location>
</feature>
<feature type="chain" id="PRO_0000056604" description="Putative peroxiredoxin-A">
    <location>
        <begin position="2"/>
        <end position="167"/>
    </location>
</feature>
<feature type="domain" description="Thioredoxin" evidence="2">
    <location>
        <begin position="4"/>
        <end position="167"/>
    </location>
</feature>
<feature type="short sequence motif" description="Microbody targeting signal">
    <location>
        <begin position="165"/>
        <end position="167"/>
    </location>
</feature>
<feature type="active site" description="Cysteine sulfenic acid (-SOH) intermediate" evidence="1">
    <location>
        <position position="53"/>
    </location>
</feature>
<name>PMPA_CANBO</name>
<organism>
    <name type="scientific">Candida boidinii</name>
    <name type="common">Yeast</name>
    <dbReference type="NCBI Taxonomy" id="5477"/>
    <lineage>
        <taxon>Eukaryota</taxon>
        <taxon>Fungi</taxon>
        <taxon>Dikarya</taxon>
        <taxon>Ascomycota</taxon>
        <taxon>Saccharomycotina</taxon>
        <taxon>Pichiomycetes</taxon>
        <taxon>Pichiales</taxon>
        <taxon>Pichiaceae</taxon>
        <taxon>Ogataea</taxon>
        <taxon>Ogataea/Candida clade</taxon>
    </lineage>
</organism>
<protein>
    <recommendedName>
        <fullName>Putative peroxiredoxin-A</fullName>
        <ecNumber evidence="1">1.11.1.24</ecNumber>
    </recommendedName>
    <alternativeName>
        <fullName>PMP20</fullName>
    </alternativeName>
    <alternativeName>
        <fullName>Peroxisomal membrane protein A</fullName>
    </alternativeName>
    <alternativeName>
        <fullName>Thioredoxin reductase</fullName>
    </alternativeName>
    <alternativeName>
        <fullName evidence="4">Thioredoxin-dependent peroxiredoxin-A</fullName>
    </alternativeName>
    <allergenName>Cand b 2</allergenName>
</protein>
<keyword id="KW-0020">Allergen</keyword>
<keyword id="KW-0049">Antioxidant</keyword>
<keyword id="KW-0903">Direct protein sequencing</keyword>
<keyword id="KW-0472">Membrane</keyword>
<keyword id="KW-0485">Methanol utilization</keyword>
<keyword id="KW-0560">Oxidoreductase</keyword>
<keyword id="KW-0575">Peroxidase</keyword>
<keyword id="KW-0576">Peroxisome</keyword>
<keyword id="KW-0676">Redox-active center</keyword>
<gene>
    <name type="primary">PMPA</name>
</gene>
<sequence length="167" mass="18004">MAPIKRGDRFPTTDDVYYIPPEGGEPGPLELSKFVKTKKFVVVSVPGAFTPPCTEQHLPGYIKNLPRILSKGVDFVLVISQNDPFVLKGWKKELGAADAKKLVFVSDPNLKLTKKLGSTIDLSAIGLGTRSGRLALIVNRSGIVEYAAIENGGEVDVSTAQKIIAKL</sequence>
<proteinExistence type="evidence at protein level"/>
<accession>P14292</accession>
<dbReference type="EC" id="1.11.1.24" evidence="1"/>
<dbReference type="EMBL" id="J04984">
    <property type="protein sequence ID" value="AAA34357.1"/>
    <property type="molecule type" value="Genomic_DNA"/>
</dbReference>
<dbReference type="PIR" id="A32646">
    <property type="entry name" value="A32646"/>
</dbReference>
<dbReference type="SMR" id="P14292"/>
<dbReference type="Allergome" id="178">
    <property type="allergen name" value="Cand b 2"/>
</dbReference>
<dbReference type="Allergome" id="3175">
    <property type="allergen name" value="Cand b 2.0101"/>
</dbReference>
<dbReference type="OrthoDB" id="195498at2759"/>
<dbReference type="GO" id="GO:0005739">
    <property type="term" value="C:mitochondrion"/>
    <property type="evidence" value="ECO:0007669"/>
    <property type="project" value="TreeGrafter"/>
</dbReference>
<dbReference type="GO" id="GO:0005778">
    <property type="term" value="C:peroxisomal membrane"/>
    <property type="evidence" value="ECO:0007669"/>
    <property type="project" value="UniProtKB-SubCell"/>
</dbReference>
<dbReference type="GO" id="GO:0008379">
    <property type="term" value="F:thioredoxin peroxidase activity"/>
    <property type="evidence" value="ECO:0007669"/>
    <property type="project" value="InterPro"/>
</dbReference>
<dbReference type="GO" id="GO:0045454">
    <property type="term" value="P:cell redox homeostasis"/>
    <property type="evidence" value="ECO:0007669"/>
    <property type="project" value="TreeGrafter"/>
</dbReference>
<dbReference type="GO" id="GO:0034599">
    <property type="term" value="P:cellular response to oxidative stress"/>
    <property type="evidence" value="ECO:0007669"/>
    <property type="project" value="InterPro"/>
</dbReference>
<dbReference type="GO" id="GO:0042744">
    <property type="term" value="P:hydrogen peroxide catabolic process"/>
    <property type="evidence" value="ECO:0007669"/>
    <property type="project" value="TreeGrafter"/>
</dbReference>
<dbReference type="GO" id="GO:0015945">
    <property type="term" value="P:methanol metabolic process"/>
    <property type="evidence" value="ECO:0007669"/>
    <property type="project" value="UniProtKB-KW"/>
</dbReference>
<dbReference type="CDD" id="cd03013">
    <property type="entry name" value="PRX5_like"/>
    <property type="match status" value="1"/>
</dbReference>
<dbReference type="Gene3D" id="3.40.30.10">
    <property type="entry name" value="Glutaredoxin"/>
    <property type="match status" value="1"/>
</dbReference>
<dbReference type="InterPro" id="IPR037944">
    <property type="entry name" value="PRX5-like"/>
</dbReference>
<dbReference type="InterPro" id="IPR013740">
    <property type="entry name" value="Redoxin"/>
</dbReference>
<dbReference type="InterPro" id="IPR036249">
    <property type="entry name" value="Thioredoxin-like_sf"/>
</dbReference>
<dbReference type="InterPro" id="IPR013766">
    <property type="entry name" value="Thioredoxin_domain"/>
</dbReference>
<dbReference type="PANTHER" id="PTHR10430">
    <property type="entry name" value="PEROXIREDOXIN"/>
    <property type="match status" value="1"/>
</dbReference>
<dbReference type="PANTHER" id="PTHR10430:SF16">
    <property type="entry name" value="PEROXIREDOXIN-5, MITOCHONDRIAL"/>
    <property type="match status" value="1"/>
</dbReference>
<dbReference type="Pfam" id="PF08534">
    <property type="entry name" value="Redoxin"/>
    <property type="match status" value="1"/>
</dbReference>
<dbReference type="SUPFAM" id="SSF52833">
    <property type="entry name" value="Thioredoxin-like"/>
    <property type="match status" value="1"/>
</dbReference>
<dbReference type="PROSITE" id="PS51352">
    <property type="entry name" value="THIOREDOXIN_2"/>
    <property type="match status" value="1"/>
</dbReference>
<evidence type="ECO:0000250" key="1">
    <source>
        <dbReference type="UniProtKB" id="P38013"/>
    </source>
</evidence>
<evidence type="ECO:0000255" key="2">
    <source>
        <dbReference type="PROSITE-ProRule" id="PRU00691"/>
    </source>
</evidence>
<evidence type="ECO:0000269" key="3">
    <source>
    </source>
</evidence>
<evidence type="ECO:0000305" key="4"/>